<dbReference type="EC" id="2.7.1.91" evidence="5"/>
<dbReference type="EMBL" id="AL022603">
    <property type="protein sequence ID" value="CAA18718.1"/>
    <property type="status" value="ALT_SEQ"/>
    <property type="molecule type" value="Genomic_DNA"/>
</dbReference>
<dbReference type="EMBL" id="AL161555">
    <property type="protein sequence ID" value="CAB81261.1"/>
    <property type="status" value="ALT_SEQ"/>
    <property type="molecule type" value="Genomic_DNA"/>
</dbReference>
<dbReference type="EMBL" id="CP002687">
    <property type="protein sequence ID" value="AEE84466.2"/>
    <property type="status" value="ALT_SEQ"/>
    <property type="molecule type" value="Genomic_DNA"/>
</dbReference>
<dbReference type="EMBL" id="AY128394">
    <property type="protein sequence ID" value="AAM91597.1"/>
    <property type="molecule type" value="mRNA"/>
</dbReference>
<dbReference type="EMBL" id="BT006621">
    <property type="protein sequence ID" value="AAP31965.1"/>
    <property type="molecule type" value="mRNA"/>
</dbReference>
<dbReference type="EMBL" id="BX826867">
    <property type="status" value="NOT_ANNOTATED_CDS"/>
    <property type="molecule type" value="mRNA"/>
</dbReference>
<dbReference type="PIR" id="T05162">
    <property type="entry name" value="T05162"/>
</dbReference>
<dbReference type="RefSeq" id="NP_001320022.1">
    <property type="nucleotide sequence ID" value="NM_001341496.1"/>
</dbReference>
<dbReference type="RefSeq" id="NP_193885.6">
    <molecule id="Q8L7L1-1"/>
    <property type="nucleotide sequence ID" value="NM_118274.8"/>
</dbReference>
<dbReference type="SMR" id="Q8L7L1"/>
<dbReference type="FunCoup" id="Q8L7L1">
    <property type="interactions" value="3199"/>
</dbReference>
<dbReference type="STRING" id="3702.Q8L7L1"/>
<dbReference type="iPTMnet" id="Q8L7L1"/>
<dbReference type="SwissPalm" id="Q8L7L1"/>
<dbReference type="PaxDb" id="3702-AT4G21540.1"/>
<dbReference type="ProteomicsDB" id="232526">
    <molecule id="Q8L7L1-1"/>
</dbReference>
<dbReference type="EnsemblPlants" id="AT4G21540.1">
    <molecule id="Q8L7L1-1"/>
    <property type="protein sequence ID" value="AT4G21540.1"/>
    <property type="gene ID" value="AT4G21540"/>
</dbReference>
<dbReference type="GeneID" id="828239"/>
<dbReference type="Gramene" id="AT4G21540.1">
    <molecule id="Q8L7L1-1"/>
    <property type="protein sequence ID" value="AT4G21540.1"/>
    <property type="gene ID" value="AT4G21540"/>
</dbReference>
<dbReference type="KEGG" id="ath:AT4G21540"/>
<dbReference type="Araport" id="AT4G21540"/>
<dbReference type="TAIR" id="AT4G21540">
    <property type="gene designation" value="SPHK1"/>
</dbReference>
<dbReference type="eggNOG" id="KOG1116">
    <property type="taxonomic scope" value="Eukaryota"/>
</dbReference>
<dbReference type="HOGENOM" id="CLU_013399_1_2_1"/>
<dbReference type="InParanoid" id="Q8L7L1"/>
<dbReference type="OMA" id="TMGNFYA"/>
<dbReference type="OrthoDB" id="3853857at2759"/>
<dbReference type="PhylomeDB" id="Q8L7L1"/>
<dbReference type="BioCyc" id="ARA:AT4G21540-MONOMER"/>
<dbReference type="BioCyc" id="MetaCyc:AT4G21540-MONOMER"/>
<dbReference type="SABIO-RK" id="Q8L7L1"/>
<dbReference type="PRO" id="PR:Q8L7L1"/>
<dbReference type="Proteomes" id="UP000006548">
    <property type="component" value="Chromosome 4"/>
</dbReference>
<dbReference type="ExpressionAtlas" id="Q8L7L1">
    <property type="expression patterns" value="baseline and differential"/>
</dbReference>
<dbReference type="GO" id="GO:0000325">
    <property type="term" value="C:plant-type vacuole"/>
    <property type="evidence" value="ECO:0007005"/>
    <property type="project" value="TAIR"/>
</dbReference>
<dbReference type="GO" id="GO:0009705">
    <property type="term" value="C:plant-type vacuole membrane"/>
    <property type="evidence" value="ECO:0000314"/>
    <property type="project" value="UniProtKB"/>
</dbReference>
<dbReference type="GO" id="GO:0005524">
    <property type="term" value="F:ATP binding"/>
    <property type="evidence" value="ECO:0007669"/>
    <property type="project" value="UniProtKB-KW"/>
</dbReference>
<dbReference type="GO" id="GO:0017050">
    <property type="term" value="F:D-erythro-sphingosine kinase activity"/>
    <property type="evidence" value="ECO:0000314"/>
    <property type="project" value="TAIR"/>
</dbReference>
<dbReference type="GO" id="GO:0008481">
    <property type="term" value="F:sphingosine kinase activity"/>
    <property type="evidence" value="ECO:0000314"/>
    <property type="project" value="UniProtKB"/>
</dbReference>
<dbReference type="GO" id="GO:0071215">
    <property type="term" value="P:cellular response to abscisic acid stimulus"/>
    <property type="evidence" value="ECO:0000315"/>
    <property type="project" value="UniProtKB"/>
</dbReference>
<dbReference type="GO" id="GO:0009737">
    <property type="term" value="P:response to abscisic acid"/>
    <property type="evidence" value="ECO:0000315"/>
    <property type="project" value="TAIR"/>
</dbReference>
<dbReference type="GO" id="GO:0009845">
    <property type="term" value="P:seed germination"/>
    <property type="evidence" value="ECO:0000315"/>
    <property type="project" value="TAIR"/>
</dbReference>
<dbReference type="GO" id="GO:0006665">
    <property type="term" value="P:sphingolipid metabolic process"/>
    <property type="evidence" value="ECO:0000314"/>
    <property type="project" value="UniProtKB"/>
</dbReference>
<dbReference type="FunFam" id="2.60.200.40:FF:000036">
    <property type="entry name" value="Sphingosine kinase 2"/>
    <property type="match status" value="1"/>
</dbReference>
<dbReference type="FunFam" id="3.40.50.10330:FF:000005">
    <property type="entry name" value="Sphingosine kinase 2"/>
    <property type="match status" value="1"/>
</dbReference>
<dbReference type="Gene3D" id="2.60.200.40">
    <property type="match status" value="1"/>
</dbReference>
<dbReference type="Gene3D" id="3.40.50.10330">
    <property type="entry name" value="Probable inorganic polyphosphate/atp-NAD kinase, domain 1"/>
    <property type="match status" value="1"/>
</dbReference>
<dbReference type="InterPro" id="IPR017438">
    <property type="entry name" value="ATP-NAD_kinase_N"/>
</dbReference>
<dbReference type="InterPro" id="IPR001206">
    <property type="entry name" value="Diacylglycerol_kinase_cat_dom"/>
</dbReference>
<dbReference type="InterPro" id="IPR050187">
    <property type="entry name" value="Lipid_Phosphate_FormReg"/>
</dbReference>
<dbReference type="InterPro" id="IPR016064">
    <property type="entry name" value="NAD/diacylglycerol_kinase_sf"/>
</dbReference>
<dbReference type="InterPro" id="IPR045540">
    <property type="entry name" value="YegS/DAGK_C"/>
</dbReference>
<dbReference type="PANTHER" id="PTHR12358:SF31">
    <property type="entry name" value="ACYLGLYCEROL KINASE, MITOCHONDRIAL"/>
    <property type="match status" value="1"/>
</dbReference>
<dbReference type="PANTHER" id="PTHR12358">
    <property type="entry name" value="SPHINGOSINE KINASE"/>
    <property type="match status" value="1"/>
</dbReference>
<dbReference type="Pfam" id="PF00781">
    <property type="entry name" value="DAGK_cat"/>
    <property type="match status" value="1"/>
</dbReference>
<dbReference type="Pfam" id="PF19279">
    <property type="entry name" value="YegS_C"/>
    <property type="match status" value="1"/>
</dbReference>
<dbReference type="SMART" id="SM00046">
    <property type="entry name" value="DAGKc"/>
    <property type="match status" value="1"/>
</dbReference>
<dbReference type="SUPFAM" id="SSF111331">
    <property type="entry name" value="NAD kinase/diacylglycerol kinase-like"/>
    <property type="match status" value="1"/>
</dbReference>
<dbReference type="PROSITE" id="PS50146">
    <property type="entry name" value="DAGK"/>
    <property type="match status" value="1"/>
</dbReference>
<accession>Q8L7L1</accession>
<accession>A0A2H1ZEN6</accession>
<accession>F4JJK0</accession>
<accession>O65419</accession>
<reference key="1">
    <citation type="journal article" date="1999" name="Nature">
        <title>Sequence and analysis of chromosome 4 of the plant Arabidopsis thaliana.</title>
        <authorList>
            <person name="Mayer K.F.X."/>
            <person name="Schueller C."/>
            <person name="Wambutt R."/>
            <person name="Murphy G."/>
            <person name="Volckaert G."/>
            <person name="Pohl T."/>
            <person name="Duesterhoeft A."/>
            <person name="Stiekema W."/>
            <person name="Entian K.-D."/>
            <person name="Terryn N."/>
            <person name="Harris B."/>
            <person name="Ansorge W."/>
            <person name="Brandt P."/>
            <person name="Grivell L.A."/>
            <person name="Rieger M."/>
            <person name="Weichselgartner M."/>
            <person name="de Simone V."/>
            <person name="Obermaier B."/>
            <person name="Mache R."/>
            <person name="Mueller M."/>
            <person name="Kreis M."/>
            <person name="Delseny M."/>
            <person name="Puigdomenech P."/>
            <person name="Watson M."/>
            <person name="Schmidtheini T."/>
            <person name="Reichert B."/>
            <person name="Portetelle D."/>
            <person name="Perez-Alonso M."/>
            <person name="Boutry M."/>
            <person name="Bancroft I."/>
            <person name="Vos P."/>
            <person name="Hoheisel J."/>
            <person name="Zimmermann W."/>
            <person name="Wedler H."/>
            <person name="Ridley P."/>
            <person name="Langham S.-A."/>
            <person name="McCullagh B."/>
            <person name="Bilham L."/>
            <person name="Robben J."/>
            <person name="van der Schueren J."/>
            <person name="Grymonprez B."/>
            <person name="Chuang Y.-J."/>
            <person name="Vandenbussche F."/>
            <person name="Braeken M."/>
            <person name="Weltjens I."/>
            <person name="Voet M."/>
            <person name="Bastiaens I."/>
            <person name="Aert R."/>
            <person name="Defoor E."/>
            <person name="Weitzenegger T."/>
            <person name="Bothe G."/>
            <person name="Ramsperger U."/>
            <person name="Hilbert H."/>
            <person name="Braun M."/>
            <person name="Holzer E."/>
            <person name="Brandt A."/>
            <person name="Peters S."/>
            <person name="van Staveren M."/>
            <person name="Dirkse W."/>
            <person name="Mooijman P."/>
            <person name="Klein Lankhorst R."/>
            <person name="Rose M."/>
            <person name="Hauf J."/>
            <person name="Koetter P."/>
            <person name="Berneiser S."/>
            <person name="Hempel S."/>
            <person name="Feldpausch M."/>
            <person name="Lamberth S."/>
            <person name="Van den Daele H."/>
            <person name="De Keyser A."/>
            <person name="Buysshaert C."/>
            <person name="Gielen J."/>
            <person name="Villarroel R."/>
            <person name="De Clercq R."/>
            <person name="van Montagu M."/>
            <person name="Rogers J."/>
            <person name="Cronin A."/>
            <person name="Quail M.A."/>
            <person name="Bray-Allen S."/>
            <person name="Clark L."/>
            <person name="Doggett J."/>
            <person name="Hall S."/>
            <person name="Kay M."/>
            <person name="Lennard N."/>
            <person name="McLay K."/>
            <person name="Mayes R."/>
            <person name="Pettett A."/>
            <person name="Rajandream M.A."/>
            <person name="Lyne M."/>
            <person name="Benes V."/>
            <person name="Rechmann S."/>
            <person name="Borkova D."/>
            <person name="Bloecker H."/>
            <person name="Scharfe M."/>
            <person name="Grimm M."/>
            <person name="Loehnert T.-H."/>
            <person name="Dose S."/>
            <person name="de Haan M."/>
            <person name="Maarse A.C."/>
            <person name="Schaefer M."/>
            <person name="Mueller-Auer S."/>
            <person name="Gabel C."/>
            <person name="Fuchs M."/>
            <person name="Fartmann B."/>
            <person name="Granderath K."/>
            <person name="Dauner D."/>
            <person name="Herzl A."/>
            <person name="Neumann S."/>
            <person name="Argiriou A."/>
            <person name="Vitale D."/>
            <person name="Liguori R."/>
            <person name="Piravandi E."/>
            <person name="Massenet O."/>
            <person name="Quigley F."/>
            <person name="Clabauld G."/>
            <person name="Muendlein A."/>
            <person name="Felber R."/>
            <person name="Schnabl S."/>
            <person name="Hiller R."/>
            <person name="Schmidt W."/>
            <person name="Lecharny A."/>
            <person name="Aubourg S."/>
            <person name="Chefdor F."/>
            <person name="Cooke R."/>
            <person name="Berger C."/>
            <person name="Monfort A."/>
            <person name="Casacuberta E."/>
            <person name="Gibbons T."/>
            <person name="Weber N."/>
            <person name="Vandenbol M."/>
            <person name="Bargues M."/>
            <person name="Terol J."/>
            <person name="Torres A."/>
            <person name="Perez-Perez A."/>
            <person name="Purnelle B."/>
            <person name="Bent E."/>
            <person name="Johnson S."/>
            <person name="Tacon D."/>
            <person name="Jesse T."/>
            <person name="Heijnen L."/>
            <person name="Schwarz S."/>
            <person name="Scholler P."/>
            <person name="Heber S."/>
            <person name="Francs P."/>
            <person name="Bielke C."/>
            <person name="Frishman D."/>
            <person name="Haase D."/>
            <person name="Lemcke K."/>
            <person name="Mewes H.-W."/>
            <person name="Stocker S."/>
            <person name="Zaccaria P."/>
            <person name="Bevan M."/>
            <person name="Wilson R.K."/>
            <person name="de la Bastide M."/>
            <person name="Habermann K."/>
            <person name="Parnell L."/>
            <person name="Dedhia N."/>
            <person name="Gnoj L."/>
            <person name="Schutz K."/>
            <person name="Huang E."/>
            <person name="Spiegel L."/>
            <person name="Sekhon M."/>
            <person name="Murray J."/>
            <person name="Sheet P."/>
            <person name="Cordes M."/>
            <person name="Abu-Threideh J."/>
            <person name="Stoneking T."/>
            <person name="Kalicki J."/>
            <person name="Graves T."/>
            <person name="Harmon G."/>
            <person name="Edwards J."/>
            <person name="Latreille P."/>
            <person name="Courtney L."/>
            <person name="Cloud J."/>
            <person name="Abbott A."/>
            <person name="Scott K."/>
            <person name="Johnson D."/>
            <person name="Minx P."/>
            <person name="Bentley D."/>
            <person name="Fulton B."/>
            <person name="Miller N."/>
            <person name="Greco T."/>
            <person name="Kemp K."/>
            <person name="Kramer J."/>
            <person name="Fulton L."/>
            <person name="Mardis E."/>
            <person name="Dante M."/>
            <person name="Pepin K."/>
            <person name="Hillier L.W."/>
            <person name="Nelson J."/>
            <person name="Spieth J."/>
            <person name="Ryan E."/>
            <person name="Andrews S."/>
            <person name="Geisel C."/>
            <person name="Layman D."/>
            <person name="Du H."/>
            <person name="Ali J."/>
            <person name="Berghoff A."/>
            <person name="Jones K."/>
            <person name="Drone K."/>
            <person name="Cotton M."/>
            <person name="Joshu C."/>
            <person name="Antonoiu B."/>
            <person name="Zidanic M."/>
            <person name="Strong C."/>
            <person name="Sun H."/>
            <person name="Lamar B."/>
            <person name="Yordan C."/>
            <person name="Ma P."/>
            <person name="Zhong J."/>
            <person name="Preston R."/>
            <person name="Vil D."/>
            <person name="Shekher M."/>
            <person name="Matero A."/>
            <person name="Shah R."/>
            <person name="Swaby I.K."/>
            <person name="O'Shaughnessy A."/>
            <person name="Rodriguez M."/>
            <person name="Hoffman J."/>
            <person name="Till S."/>
            <person name="Granat S."/>
            <person name="Shohdy N."/>
            <person name="Hasegawa A."/>
            <person name="Hameed A."/>
            <person name="Lodhi M."/>
            <person name="Johnson A."/>
            <person name="Chen E."/>
            <person name="Marra M.A."/>
            <person name="Martienssen R."/>
            <person name="McCombie W.R."/>
        </authorList>
    </citation>
    <scope>NUCLEOTIDE SEQUENCE [LARGE SCALE GENOMIC DNA]</scope>
    <source>
        <strain>cv. Columbia</strain>
    </source>
</reference>
<reference key="2">
    <citation type="journal article" date="2017" name="Plant J.">
        <title>Araport11: a complete reannotation of the Arabidopsis thaliana reference genome.</title>
        <authorList>
            <person name="Cheng C.Y."/>
            <person name="Krishnakumar V."/>
            <person name="Chan A.P."/>
            <person name="Thibaud-Nissen F."/>
            <person name="Schobel S."/>
            <person name="Town C.D."/>
        </authorList>
    </citation>
    <scope>GENOME REANNOTATION</scope>
    <source>
        <strain>cv. Columbia</strain>
    </source>
</reference>
<reference key="3">
    <citation type="journal article" date="2003" name="Science">
        <title>Empirical analysis of transcriptional activity in the Arabidopsis genome.</title>
        <authorList>
            <person name="Yamada K."/>
            <person name="Lim J."/>
            <person name="Dale J.M."/>
            <person name="Chen H."/>
            <person name="Shinn P."/>
            <person name="Palm C.J."/>
            <person name="Southwick A.M."/>
            <person name="Wu H.C."/>
            <person name="Kim C.J."/>
            <person name="Nguyen M."/>
            <person name="Pham P.K."/>
            <person name="Cheuk R.F."/>
            <person name="Karlin-Newmann G."/>
            <person name="Liu S.X."/>
            <person name="Lam B."/>
            <person name="Sakano H."/>
            <person name="Wu T."/>
            <person name="Yu G."/>
            <person name="Miranda M."/>
            <person name="Quach H.L."/>
            <person name="Tripp M."/>
            <person name="Chang C.H."/>
            <person name="Lee J.M."/>
            <person name="Toriumi M.J."/>
            <person name="Chan M.M."/>
            <person name="Tang C.C."/>
            <person name="Onodera C.S."/>
            <person name="Deng J.M."/>
            <person name="Akiyama K."/>
            <person name="Ansari Y."/>
            <person name="Arakawa T."/>
            <person name="Banh J."/>
            <person name="Banno F."/>
            <person name="Bowser L."/>
            <person name="Brooks S.Y."/>
            <person name="Carninci P."/>
            <person name="Chao Q."/>
            <person name="Choy N."/>
            <person name="Enju A."/>
            <person name="Goldsmith A.D."/>
            <person name="Gurjal M."/>
            <person name="Hansen N.F."/>
            <person name="Hayashizaki Y."/>
            <person name="Johnson-Hopson C."/>
            <person name="Hsuan V.W."/>
            <person name="Iida K."/>
            <person name="Karnes M."/>
            <person name="Khan S."/>
            <person name="Koesema E."/>
            <person name="Ishida J."/>
            <person name="Jiang P.X."/>
            <person name="Jones T."/>
            <person name="Kawai J."/>
            <person name="Kamiya A."/>
            <person name="Meyers C."/>
            <person name="Nakajima M."/>
            <person name="Narusaka M."/>
            <person name="Seki M."/>
            <person name="Sakurai T."/>
            <person name="Satou M."/>
            <person name="Tamse R."/>
            <person name="Vaysberg M."/>
            <person name="Wallender E.K."/>
            <person name="Wong C."/>
            <person name="Yamamura Y."/>
            <person name="Yuan S."/>
            <person name="Shinozaki K."/>
            <person name="Davis R.W."/>
            <person name="Theologis A."/>
            <person name="Ecker J.R."/>
        </authorList>
    </citation>
    <scope>NUCLEOTIDE SEQUENCE [LARGE SCALE MRNA] (ISOFORM 1)</scope>
    <source>
        <strain>cv. Columbia</strain>
    </source>
</reference>
<reference key="4">
    <citation type="journal article" date="2004" name="Genome Res.">
        <title>Whole genome sequence comparisons and 'full-length' cDNA sequences: a combined approach to evaluate and improve Arabidopsis genome annotation.</title>
        <authorList>
            <person name="Castelli V."/>
            <person name="Aury J.-M."/>
            <person name="Jaillon O."/>
            <person name="Wincker P."/>
            <person name="Clepet C."/>
            <person name="Menard M."/>
            <person name="Cruaud C."/>
            <person name="Quetier F."/>
            <person name="Scarpelli C."/>
            <person name="Schaechter V."/>
            <person name="Temple G."/>
            <person name="Caboche M."/>
            <person name="Weissenbach J."/>
            <person name="Salanoubat M."/>
        </authorList>
    </citation>
    <scope>NUCLEOTIDE SEQUENCE [LARGE SCALE MRNA] (ISOFORM 2)</scope>
    <source>
        <strain>cv. Columbia</strain>
    </source>
</reference>
<reference key="5">
    <citation type="journal article" date="2008" name="Plant J.">
        <title>Involvement of sphingosine kinase in plant cell signalling.</title>
        <authorList>
            <person name="Worrall D."/>
            <person name="Liang Y.K."/>
            <person name="Alvarez S."/>
            <person name="Holroyd G.H."/>
            <person name="Spiegel S."/>
            <person name="Panagopulos M."/>
            <person name="Gray J.E."/>
            <person name="Hetherington A.M."/>
        </authorList>
    </citation>
    <scope>FUNCTION</scope>
    <scope>DISRUPTION PHENOTYPE</scope>
</reference>
<reference key="6">
    <citation type="journal article" date="2008" name="Plant J.">
        <title>Systematic analysis of protein subcellular localization and interaction using high-throughput transient transformation of Arabidopsis seedlings.</title>
        <authorList>
            <person name="Marion J."/>
            <person name="Bach L."/>
            <person name="Bellec Y."/>
            <person name="Meyer C."/>
            <person name="Gissot L."/>
            <person name="Faure J.D."/>
        </authorList>
    </citation>
    <scope>SUBCELLULAR LOCATION</scope>
</reference>
<reference key="7">
    <citation type="journal article" date="2011" name="J. Biol. Chem.">
        <title>Phosphatidic acid binds and stimulates Arabidopsis sphingosine kinases.</title>
        <authorList>
            <person name="Guo L."/>
            <person name="Mishra G."/>
            <person name="Taylor K."/>
            <person name="Wang X."/>
        </authorList>
    </citation>
    <scope>FUNCTION</scope>
    <scope>CATALYTIC ACTIVITY</scope>
    <scope>BIOPHYSICOCHEMICAL PROPERTIES</scope>
    <scope>ACTIVITY REGULATION</scope>
    <scope>SUBCELLULAR LOCATION</scope>
    <scope>TISSUE SPECIFICITY</scope>
</reference>
<reference key="8">
    <citation type="journal article" date="2012" name="J. Biol. Chem.">
        <title>Connections between sphingosine kinase and phospholipase D in the abscisic acid signaling pathway in Arabidopsis.</title>
        <authorList>
            <person name="Guo L."/>
            <person name="Mishra G."/>
            <person name="Markham J.E."/>
            <person name="Li M."/>
            <person name="Tawfall A."/>
            <person name="Welti R."/>
            <person name="Wang X."/>
        </authorList>
    </citation>
    <scope>FUNCTION</scope>
    <scope>DISRUPTION PHENOTYPE</scope>
</reference>
<protein>
    <recommendedName>
        <fullName>Sphingosine kinase 1</fullName>
        <ecNumber evidence="5">2.7.1.91</ecNumber>
    </recommendedName>
</protein>
<evidence type="ECO:0000250" key="1"/>
<evidence type="ECO:0000250" key="2">
    <source>
        <dbReference type="UniProtKB" id="Q9NYA1"/>
    </source>
</evidence>
<evidence type="ECO:0000255" key="3">
    <source>
        <dbReference type="PROSITE-ProRule" id="PRU00783"/>
    </source>
</evidence>
<evidence type="ECO:0000269" key="4">
    <source>
    </source>
</evidence>
<evidence type="ECO:0000269" key="5">
    <source>
    </source>
</evidence>
<evidence type="ECO:0000269" key="6">
    <source>
    </source>
</evidence>
<evidence type="ECO:0000303" key="7">
    <source>
    </source>
</evidence>
<evidence type="ECO:0000305" key="8"/>
<evidence type="ECO:0000305" key="9">
    <source>
    </source>
</evidence>
<evidence type="ECO:0000305" key="10">
    <source>
    </source>
</evidence>
<proteinExistence type="evidence at protein level"/>
<keyword id="KW-0025">Alternative splicing</keyword>
<keyword id="KW-0067">ATP-binding</keyword>
<keyword id="KW-0418">Kinase</keyword>
<keyword id="KW-0472">Membrane</keyword>
<keyword id="KW-0547">Nucleotide-binding</keyword>
<keyword id="KW-1185">Reference proteome</keyword>
<keyword id="KW-0346">Stress response</keyword>
<keyword id="KW-0808">Transferase</keyword>
<keyword id="KW-0926">Vacuole</keyword>
<name>SPHK1_ARATH</name>
<comment type="function">
    <text evidence="4 5 6">Involved in the production of sphingolipid metabolites. Phosphorylates sphingosine and various sphingoid long-chain base (LCB) products, such as phytosphingosine (PHS, 4-hydroxysphinganine), 4-hydroxy-8-sphingenine, 4,8-sphingadienine, D-erythro-dihydrosphingosine and D,L-threo-dihydrosphingosine. Is required for abscisic acid (ABA) signaling that mediates stomatal closure, inhibition of seed germination and root elongation. May function upstream of PLDALPHA1 and phosphatidic acid (PA) in an amplification response to ABA that mediates stomatal closure.</text>
</comment>
<comment type="catalytic activity">
    <reaction evidence="5">
        <text>a sphingoid base + ATP = a sphingoid 1-phosphate + ADP + H(+)</text>
        <dbReference type="Rhea" id="RHEA:51496"/>
        <dbReference type="ChEBI" id="CHEBI:15378"/>
        <dbReference type="ChEBI" id="CHEBI:30616"/>
        <dbReference type="ChEBI" id="CHEBI:76941"/>
        <dbReference type="ChEBI" id="CHEBI:84410"/>
        <dbReference type="ChEBI" id="CHEBI:456216"/>
        <dbReference type="EC" id="2.7.1.91"/>
    </reaction>
</comment>
<comment type="cofactor">
    <cofactor evidence="1">
        <name>Mg(2+)</name>
        <dbReference type="ChEBI" id="CHEBI:18420"/>
    </cofactor>
</comment>
<comment type="activity regulation">
    <text evidence="5">Activated by phosphatidic acid (PA). Binding with PA stimulates the activity by promoting the binding of substrate to the catalytic site.</text>
</comment>
<comment type="biophysicochemical properties">
    <kinetics>
        <KM evidence="5">55 uM for phytosphingosine</KM>
        <Vmax evidence="5">12.94 nmol/min/mg enzyme toward phytosphingosine</Vmax>
    </kinetics>
</comment>
<comment type="subcellular location">
    <subcellularLocation>
        <location evidence="9 10">Vacuole membrane</location>
        <topology evidence="9 10">Peripheral membrane protein</topology>
    </subcellularLocation>
    <text>Associated with the tonoplast.</text>
</comment>
<comment type="alternative products">
    <event type="alternative splicing"/>
    <isoform>
        <id>Q8L7L1-1</id>
        <name>1</name>
        <sequence type="displayed"/>
    </isoform>
    <isoform>
        <id>Q8L7L1-2</id>
        <name>2</name>
        <sequence type="described" ref="VSP_046412 VSP_046413"/>
    </isoform>
</comment>
<comment type="tissue specificity">
    <text evidence="5">Highly expressed in stems and flowers and at lower levels in roots, leaves and siliques.</text>
</comment>
<comment type="disruption phenotype">
    <text evidence="4 6">No visible phenotype under normal growth conditions, but seeds have increased germination speed after imbibition, without affecting overall germination rate.</text>
</comment>
<comment type="sequence caution" evidence="8">
    <conflict type="erroneous gene model prediction">
        <sequence resource="EMBL-CDS" id="AEE84466"/>
    </conflict>
</comment>
<comment type="sequence caution" evidence="8">
    <conflict type="erroneous gene model prediction">
        <sequence resource="EMBL-CDS" id="CAA18718"/>
    </conflict>
    <text>The predicted gene At4g21540 has been split into 2 genes: At4g21534 and At4g21540.</text>
</comment>
<comment type="sequence caution" evidence="8">
    <conflict type="erroneous gene model prediction">
        <sequence resource="EMBL-CDS" id="CAB81261"/>
    </conflict>
    <text>The predicted gene At4g21540 has been split into 2 genes: At4g21534 and At4g21540.</text>
</comment>
<organism>
    <name type="scientific">Arabidopsis thaliana</name>
    <name type="common">Mouse-ear cress</name>
    <dbReference type="NCBI Taxonomy" id="3702"/>
    <lineage>
        <taxon>Eukaryota</taxon>
        <taxon>Viridiplantae</taxon>
        <taxon>Streptophyta</taxon>
        <taxon>Embryophyta</taxon>
        <taxon>Tracheophyta</taxon>
        <taxon>Spermatophyta</taxon>
        <taxon>Magnoliopsida</taxon>
        <taxon>eudicotyledons</taxon>
        <taxon>Gunneridae</taxon>
        <taxon>Pentapetalae</taxon>
        <taxon>rosids</taxon>
        <taxon>malvids</taxon>
        <taxon>Brassicales</taxon>
        <taxon>Brassicaceae</taxon>
        <taxon>Camelineae</taxon>
        <taxon>Arabidopsis</taxon>
    </lineage>
</organism>
<sequence>MDRQPERENDELPSPAIISDRVLVNGVVTPLTLTAEGELRSTESGRRKSTLAKEILSFVVEGNKVRVKTLVEKGGGICCRGSAGDYARNDFVFEPLSDESRKLWSDKFHQHLVSLGRPKKLLVFVNPFGGKKTARKIFQEEVKPLFEDANIQLEIQETKYQLHAKEIVRSMDVSKYDGIVCVSGDGILVEVVNGLLEREDWKTAIKLPIGMVPAGSGNGMIKSLLEPVGLPCSATSATISIIRGRTRSLDVATISQGTTKFFSVLMLAWGLVADIDIESEKFRWMGSARFDIYGLQRIICLRQYHGRILFVPAPGFESYGQRASCSIDKEPSGSDKTLVYQGPDSKLENLDWREMKGPFVSVWLHNVPWGAENTLAAPDAKFSDGFLDLIVMKDCPKLALLSLMTKLSDGTHVQSPYASYLKVKAFVLEPGARIDEPDKEGIIDSDGEVLARGRKSYKCDQKALMSYDKLQISVDQGLATLFSPE</sequence>
<gene>
    <name type="primary">SPHK1</name>
    <name type="ordered locus">At4g21540</name>
    <name type="ORF">F18E5.160</name>
</gene>
<feature type="chain" id="PRO_0000422116" description="Sphingosine kinase 1">
    <location>
        <begin position="1"/>
        <end position="485"/>
    </location>
</feature>
<feature type="domain" description="DAGKc" evidence="3">
    <location>
        <begin position="116"/>
        <end position="258"/>
    </location>
</feature>
<feature type="active site" description="Proton donor/acceptor" evidence="2">
    <location>
        <position position="185"/>
    </location>
</feature>
<feature type="binding site" evidence="3">
    <location>
        <begin position="126"/>
        <end position="128"/>
    </location>
    <ligand>
        <name>ATP</name>
        <dbReference type="ChEBI" id="CHEBI:30616"/>
    </ligand>
</feature>
<feature type="binding site" evidence="3">
    <location>
        <position position="158"/>
    </location>
    <ligand>
        <name>ATP</name>
        <dbReference type="ChEBI" id="CHEBI:30616"/>
    </ligand>
</feature>
<feature type="binding site" evidence="2">
    <location>
        <begin position="183"/>
        <end position="186"/>
    </location>
    <ligand>
        <name>substrate</name>
    </ligand>
</feature>
<feature type="binding site" evidence="3">
    <location>
        <position position="190"/>
    </location>
    <ligand>
        <name>ATP</name>
        <dbReference type="ChEBI" id="CHEBI:30616"/>
    </ligand>
</feature>
<feature type="binding site" evidence="3">
    <location>
        <begin position="215"/>
        <end position="217"/>
    </location>
    <ligand>
        <name>ATP</name>
        <dbReference type="ChEBI" id="CHEBI:30616"/>
    </ligand>
</feature>
<feature type="binding site" evidence="1">
    <location>
        <position position="276"/>
    </location>
    <ligand>
        <name>substrate</name>
    </ligand>
</feature>
<feature type="binding site" evidence="3">
    <location>
        <position position="283"/>
    </location>
    <ligand>
        <name>ATP</name>
        <dbReference type="ChEBI" id="CHEBI:30616"/>
    </ligand>
</feature>
<feature type="binding site" evidence="3">
    <location>
        <position position="289"/>
    </location>
    <ligand>
        <name>ATP</name>
        <dbReference type="ChEBI" id="CHEBI:30616"/>
    </ligand>
</feature>
<feature type="binding site" evidence="3">
    <location>
        <begin position="446"/>
        <end position="448"/>
    </location>
    <ligand>
        <name>ATP</name>
        <dbReference type="ChEBI" id="CHEBI:30616"/>
    </ligand>
</feature>
<feature type="splice variant" id="VSP_046412" description="In isoform 2." evidence="7">
    <original>ARFDIYGLQRIICLRQYHGRILFVPAPGFESYG</original>
    <variation>SEDNMLKTIPWTNSICASSWVRKLWATSQLQYR</variation>
    <location>
        <begin position="288"/>
        <end position="320"/>
    </location>
</feature>
<feature type="splice variant" id="VSP_046413" description="In isoform 2." evidence="7">
    <location>
        <begin position="321"/>
        <end position="485"/>
    </location>
</feature>